<accession>P84801</accession>
<protein>
    <recommendedName>
        <fullName>Griffithsin</fullName>
        <shortName>GRFT</shortName>
    </recommendedName>
</protein>
<feature type="chain" id="PRO_0000228815" description="Griffithsin">
    <location>
        <begin position="1"/>
        <end position="121"/>
    </location>
</feature>
<feature type="domain" description="Jacalin-type lectin" evidence="1">
    <location>
        <begin position="1"/>
        <end position="120"/>
    </location>
</feature>
<feature type="strand" evidence="4">
    <location>
        <begin position="2"/>
        <end position="8"/>
    </location>
</feature>
<feature type="strand" evidence="4">
    <location>
        <begin position="12"/>
        <end position="15"/>
    </location>
</feature>
<feature type="strand" evidence="4">
    <location>
        <begin position="20"/>
        <end position="34"/>
    </location>
</feature>
<feature type="strand" evidence="4">
    <location>
        <begin position="37"/>
        <end position="40"/>
    </location>
</feature>
<feature type="strand" evidence="4">
    <location>
        <begin position="44"/>
        <end position="46"/>
    </location>
</feature>
<feature type="strand" evidence="4">
    <location>
        <begin position="58"/>
        <end position="76"/>
    </location>
</feature>
<feature type="strand" evidence="4">
    <location>
        <begin position="81"/>
        <end position="86"/>
    </location>
</feature>
<feature type="strand" evidence="4">
    <location>
        <begin position="90"/>
        <end position="120"/>
    </location>
</feature>
<reference evidence="3" key="1">
    <citation type="journal article" date="2005" name="J. Biol. Chem.">
        <title>Isolation and characterization of griffithsin, a novel HIV-inactivating protein, from the red alga Griffithsia sp.</title>
        <authorList>
            <person name="Mori T."/>
            <person name="O'Keefe B.R."/>
            <person name="Sowder R.C. II"/>
            <person name="Bringans S."/>
            <person name="Gardella R."/>
            <person name="Berg S."/>
            <person name="Cochran P."/>
            <person name="Turpin J.A."/>
            <person name="Buckheit R.W. Jr."/>
            <person name="McMahon J.B."/>
            <person name="Boyd M.R."/>
        </authorList>
    </citation>
    <scope>PROTEIN SEQUENCE</scope>
    <scope>FUNCTION</scope>
    <scope>MASS SPECTROMETRY</scope>
</reference>
<name>GRFIN_GRISQ</name>
<evidence type="ECO:0000255" key="1">
    <source>
        <dbReference type="PROSITE-ProRule" id="PRU01088"/>
    </source>
</evidence>
<evidence type="ECO:0000269" key="2">
    <source>
    </source>
</evidence>
<evidence type="ECO:0000305" key="3"/>
<evidence type="ECO:0007829" key="4">
    <source>
        <dbReference type="PDB" id="2GUD"/>
    </source>
</evidence>
<proteinExistence type="evidence at protein level"/>
<dbReference type="PDB" id="2GTY">
    <property type="method" value="X-ray"/>
    <property type="resolution" value="1.30 A"/>
    <property type="chains" value="A/B=1-121"/>
</dbReference>
<dbReference type="PDB" id="2GUC">
    <property type="method" value="X-ray"/>
    <property type="resolution" value="1.79 A"/>
    <property type="chains" value="A/B=1-121"/>
</dbReference>
<dbReference type="PDB" id="2GUD">
    <property type="method" value="X-ray"/>
    <property type="resolution" value="0.94 A"/>
    <property type="chains" value="A/B=1-121"/>
</dbReference>
<dbReference type="PDB" id="2GUE">
    <property type="method" value="X-ray"/>
    <property type="resolution" value="2.02 A"/>
    <property type="chains" value="A/B=1-121"/>
</dbReference>
<dbReference type="PDB" id="2GUX">
    <property type="method" value="X-ray"/>
    <property type="resolution" value="2.00 A"/>
    <property type="chains" value="A=1-121"/>
</dbReference>
<dbReference type="PDB" id="2HYQ">
    <property type="method" value="X-ray"/>
    <property type="resolution" value="2.00 A"/>
    <property type="chains" value="A/B=1-121"/>
</dbReference>
<dbReference type="PDB" id="2HYR">
    <property type="method" value="X-ray"/>
    <property type="resolution" value="1.51 A"/>
    <property type="chains" value="A/B=1-121"/>
</dbReference>
<dbReference type="PDB" id="2NU5">
    <property type="method" value="X-ray"/>
    <property type="resolution" value="1.56 A"/>
    <property type="chains" value="A/B=1-121"/>
</dbReference>
<dbReference type="PDB" id="2NUO">
    <property type="method" value="X-ray"/>
    <property type="resolution" value="1.50 A"/>
    <property type="chains" value="A/B=1-121"/>
</dbReference>
<dbReference type="PDB" id="3LKY">
    <property type="method" value="X-ray"/>
    <property type="resolution" value="1.11 A"/>
    <property type="chains" value="A=1-121"/>
</dbReference>
<dbReference type="PDB" id="3LL0">
    <property type="method" value="X-ray"/>
    <property type="resolution" value="1.70 A"/>
    <property type="chains" value="A=1-121"/>
</dbReference>
<dbReference type="PDB" id="3LL1">
    <property type="method" value="X-ray"/>
    <property type="resolution" value="0.97 A"/>
    <property type="chains" value="A=1-119"/>
</dbReference>
<dbReference type="PDB" id="3LL2">
    <property type="method" value="X-ray"/>
    <property type="resolution" value="0.97 A"/>
    <property type="chains" value="A=1-121"/>
</dbReference>
<dbReference type="PDB" id="7RIA">
    <property type="method" value="X-ray"/>
    <property type="resolution" value="1.80 A"/>
    <property type="chains" value="A/B=2-121"/>
</dbReference>
<dbReference type="PDB" id="7RIB">
    <property type="method" value="X-ray"/>
    <property type="resolution" value="2.10 A"/>
    <property type="chains" value="A/B/C=2-121"/>
</dbReference>
<dbReference type="PDB" id="7RIC">
    <property type="method" value="X-ray"/>
    <property type="resolution" value="1.95 A"/>
    <property type="chains" value="A=2-121"/>
</dbReference>
<dbReference type="PDB" id="7RID">
    <property type="method" value="X-ray"/>
    <property type="resolution" value="2.30 A"/>
    <property type="chains" value="A=2-121"/>
</dbReference>
<dbReference type="PDB" id="7RKG">
    <property type="method" value="X-ray"/>
    <property type="resolution" value="2.20 A"/>
    <property type="chains" value="A/B=2-121"/>
</dbReference>
<dbReference type="PDB" id="7RKI">
    <property type="method" value="X-ray"/>
    <property type="resolution" value="2.09 A"/>
    <property type="chains" value="A/B=2-121"/>
</dbReference>
<dbReference type="PDBsum" id="2GTY"/>
<dbReference type="PDBsum" id="2GUC"/>
<dbReference type="PDBsum" id="2GUD"/>
<dbReference type="PDBsum" id="2GUE"/>
<dbReference type="PDBsum" id="2GUX"/>
<dbReference type="PDBsum" id="2HYQ"/>
<dbReference type="PDBsum" id="2HYR"/>
<dbReference type="PDBsum" id="2NU5"/>
<dbReference type="PDBsum" id="2NUO"/>
<dbReference type="PDBsum" id="3LKY"/>
<dbReference type="PDBsum" id="3LL0"/>
<dbReference type="PDBsum" id="3LL1"/>
<dbReference type="PDBsum" id="3LL2"/>
<dbReference type="PDBsum" id="7RIA"/>
<dbReference type="PDBsum" id="7RIB"/>
<dbReference type="PDBsum" id="7RIC"/>
<dbReference type="PDBsum" id="7RID"/>
<dbReference type="PDBsum" id="7RKG"/>
<dbReference type="PDBsum" id="7RKI"/>
<dbReference type="BMRB" id="P84801"/>
<dbReference type="SMR" id="P84801"/>
<dbReference type="DIP" id="DIP-29130N"/>
<dbReference type="IntAct" id="P84801">
    <property type="interactions" value="1"/>
</dbReference>
<dbReference type="MINT" id="P84801"/>
<dbReference type="UniLectin" id="P84801"/>
<dbReference type="EvolutionaryTrace" id="P84801"/>
<dbReference type="GO" id="GO:0030246">
    <property type="term" value="F:carbohydrate binding"/>
    <property type="evidence" value="ECO:0000314"/>
    <property type="project" value="UniProtKB"/>
</dbReference>
<dbReference type="GO" id="GO:0005536">
    <property type="term" value="F:D-glucose binding"/>
    <property type="evidence" value="ECO:0000314"/>
    <property type="project" value="UniProtKB"/>
</dbReference>
<dbReference type="GO" id="GO:0005537">
    <property type="term" value="F:D-mannose binding"/>
    <property type="evidence" value="ECO:0000314"/>
    <property type="project" value="UniProtKB"/>
</dbReference>
<dbReference type="GO" id="GO:0042802">
    <property type="term" value="F:identical protein binding"/>
    <property type="evidence" value="ECO:0000353"/>
    <property type="project" value="IntAct"/>
</dbReference>
<dbReference type="GO" id="GO:0046871">
    <property type="term" value="F:N-acetylgalactosamine binding"/>
    <property type="evidence" value="ECO:0000314"/>
    <property type="project" value="UniProtKB"/>
</dbReference>
<dbReference type="Gene3D" id="2.100.10.30">
    <property type="entry name" value="Jacalin-like lectin domain"/>
    <property type="match status" value="1"/>
</dbReference>
<dbReference type="InterPro" id="IPR001229">
    <property type="entry name" value="Jacalin-like_lectin_dom"/>
</dbReference>
<dbReference type="InterPro" id="IPR036404">
    <property type="entry name" value="Jacalin-like_lectin_dom_sf"/>
</dbReference>
<dbReference type="Pfam" id="PF01419">
    <property type="entry name" value="Jacalin"/>
    <property type="match status" value="1"/>
</dbReference>
<dbReference type="SMART" id="SM00915">
    <property type="entry name" value="Jacalin"/>
    <property type="match status" value="1"/>
</dbReference>
<dbReference type="SUPFAM" id="SSF51101">
    <property type="entry name" value="Mannose-binding lectins"/>
    <property type="match status" value="1"/>
</dbReference>
<dbReference type="PROSITE" id="PS51752">
    <property type="entry name" value="JACALIN_LECTIN"/>
    <property type="match status" value="1"/>
</dbReference>
<comment type="function">
    <text evidence="2">Mixed specificity lectin with anti-HIV activity. Binds to HIV envelope glycoproteins, including exterior membrane glycoprotein gp120, and inhibits viral entry into cells. Binding to gp120 is dependent on gp120 being glycosylated, and is inhibited by mannose, glucose and N-acetylglucosamine.</text>
</comment>
<comment type="interaction">
    <interactant intactId="EBI-8453570">
        <id>P84801</id>
    </interactant>
    <interactant intactId="EBI-8453570">
        <id>P84801</id>
        <label>-</label>
    </interactant>
    <organismsDiffer>false</organismsDiffer>
    <experiments>3</experiments>
</comment>
<comment type="interaction">
    <interactant intactId="EBI-8453570">
        <id>P84801</id>
    </interactant>
    <interactant intactId="EBI-8453491">
        <id>Q75760</id>
        <label>env</label>
    </interactant>
    <organismsDiffer>true</organismsDiffer>
    <experiments>2</experiments>
</comment>
<comment type="mass spectrometry"/>
<comment type="similarity">
    <text evidence="1 3">Belongs to the jacalin lectin family.</text>
</comment>
<organism>
    <name type="scientific">Griffithsia sp. (strain Q66D336)</name>
    <name type="common">Red alga</name>
    <dbReference type="NCBI Taxonomy" id="373036"/>
    <lineage>
        <taxon>Eukaryota</taxon>
        <taxon>Rhodophyta</taxon>
        <taxon>Florideophyceae</taxon>
        <taxon>Rhodymeniophycidae</taxon>
        <taxon>Ceramiales</taxon>
        <taxon>Ceramiaceae</taxon>
        <taxon>Griffithsia</taxon>
    </lineage>
</organism>
<keyword id="KW-0002">3D-structure</keyword>
<keyword id="KW-0903">Direct protein sequencing</keyword>
<keyword id="KW-0430">Lectin</keyword>
<keyword id="KW-0465">Mannose-binding</keyword>
<sequence>SLTHRKFGGSGGSPFSGLSSIAVRSGSYLDXIIIDGVHHGGSGGNLSPTFTFGSGEYISNMTIRSGDYIDNISFETNMGRRFGPYGGSGGSANTLSNVKVIQINGSAGDYLDSLDIYYEQY</sequence>